<comment type="function">
    <text evidence="1">Antitoxin component of a type II type II toxin-antitoxin (TA) system. Neutralizes the toxic effect of cognate toxin HipA. Represses the hipBA operon promoter (By similarity).</text>
</comment>
<comment type="subunit">
    <text evidence="1">Homodimer. Forms a HipA(2)HipB(2) heterotetramer which can interact with DNA. This complex also blocks the toxic activity of HipA (By similarity).</text>
</comment>
<comment type="disruption phenotype">
    <text evidence="3">Deletion of the hipB-hipA operon has no effect on virulence in mouse infection; the disrupted strain is as virulent as wild-type.</text>
</comment>
<organism>
    <name type="scientific">Escherichia coli O6:H1 (strain CFT073 / ATCC 700928 / UPEC)</name>
    <dbReference type="NCBI Taxonomy" id="199310"/>
    <lineage>
        <taxon>Bacteria</taxon>
        <taxon>Pseudomonadati</taxon>
        <taxon>Pseudomonadota</taxon>
        <taxon>Gammaproteobacteria</taxon>
        <taxon>Enterobacterales</taxon>
        <taxon>Enterobacteriaceae</taxon>
        <taxon>Escherichia</taxon>
    </lineage>
</organism>
<evidence type="ECO:0000250" key="1">
    <source>
        <dbReference type="UniProtKB" id="P23873"/>
    </source>
</evidence>
<evidence type="ECO:0000255" key="2">
    <source>
        <dbReference type="PROSITE-ProRule" id="PRU00257"/>
    </source>
</evidence>
<evidence type="ECO:0000269" key="3">
    <source>
    </source>
</evidence>
<feature type="chain" id="PRO_0000420797" description="Antitoxin HipB">
    <location>
        <begin position="1"/>
        <end position="94"/>
    </location>
</feature>
<feature type="domain" description="HTH cro/C1-type" evidence="2">
    <location>
        <begin position="23"/>
        <end position="77"/>
    </location>
</feature>
<feature type="DNA-binding region" description="H-T-H motif" evidence="2">
    <location>
        <begin position="34"/>
        <end position="53"/>
    </location>
</feature>
<dbReference type="EMBL" id="AE014075">
    <property type="protein sequence ID" value="AAN80399.1"/>
    <property type="molecule type" value="Genomic_DNA"/>
</dbReference>
<dbReference type="SMR" id="Q8FHF3"/>
<dbReference type="STRING" id="199310.c1941"/>
<dbReference type="KEGG" id="ecc:c1941"/>
<dbReference type="eggNOG" id="COG1396">
    <property type="taxonomic scope" value="Bacteria"/>
</dbReference>
<dbReference type="HOGENOM" id="CLU_066192_47_2_6"/>
<dbReference type="BioCyc" id="ECOL199310:C1941-MONOMER"/>
<dbReference type="Proteomes" id="UP000001410">
    <property type="component" value="Chromosome"/>
</dbReference>
<dbReference type="GO" id="GO:0003677">
    <property type="term" value="F:DNA binding"/>
    <property type="evidence" value="ECO:0007669"/>
    <property type="project" value="UniProtKB-KW"/>
</dbReference>
<dbReference type="CDD" id="cd00093">
    <property type="entry name" value="HTH_XRE"/>
    <property type="match status" value="1"/>
</dbReference>
<dbReference type="FunFam" id="1.10.260.40:FF:000038">
    <property type="entry name" value="HTH-type transcriptional regulator hipB"/>
    <property type="match status" value="1"/>
</dbReference>
<dbReference type="Gene3D" id="1.10.260.40">
    <property type="entry name" value="lambda repressor-like DNA-binding domains"/>
    <property type="match status" value="1"/>
</dbReference>
<dbReference type="InterPro" id="IPR001387">
    <property type="entry name" value="Cro/C1-type_HTH"/>
</dbReference>
<dbReference type="InterPro" id="IPR010982">
    <property type="entry name" value="Lambda_DNA-bd_dom_sf"/>
</dbReference>
<dbReference type="NCBIfam" id="NF007271">
    <property type="entry name" value="PRK09726.1"/>
    <property type="match status" value="1"/>
</dbReference>
<dbReference type="Pfam" id="PF01381">
    <property type="entry name" value="HTH_3"/>
    <property type="match status" value="1"/>
</dbReference>
<dbReference type="SMART" id="SM00530">
    <property type="entry name" value="HTH_XRE"/>
    <property type="match status" value="1"/>
</dbReference>
<dbReference type="SUPFAM" id="SSF47413">
    <property type="entry name" value="lambda repressor-like DNA-binding domains"/>
    <property type="match status" value="1"/>
</dbReference>
<dbReference type="PROSITE" id="PS50943">
    <property type="entry name" value="HTH_CROC1"/>
    <property type="match status" value="1"/>
</dbReference>
<gene>
    <name type="primary">hipB</name>
    <name type="ordered locus">c1941</name>
</gene>
<sequence>MLWTYDMMSFQKIYSPTQLANAMKLVRQQNGWTQSELAKKIGIKQATISNFENNPDNTSLTTFFKILQSLELSMTLCDAKNASPEAAEQQDLEW</sequence>
<name>HIPB_ECOL6</name>
<protein>
    <recommendedName>
        <fullName>Antitoxin HipB</fullName>
    </recommendedName>
</protein>
<keyword id="KW-0238">DNA-binding</keyword>
<keyword id="KW-1185">Reference proteome</keyword>
<keyword id="KW-0678">Repressor</keyword>
<keyword id="KW-1277">Toxin-antitoxin system</keyword>
<keyword id="KW-0804">Transcription</keyword>
<keyword id="KW-0805">Transcription regulation</keyword>
<proteinExistence type="inferred from homology"/>
<reference key="1">
    <citation type="journal article" date="2002" name="Proc. Natl. Acad. Sci. U.S.A.">
        <title>Extensive mosaic structure revealed by the complete genome sequence of uropathogenic Escherichia coli.</title>
        <authorList>
            <person name="Welch R.A."/>
            <person name="Burland V."/>
            <person name="Plunkett G. III"/>
            <person name="Redford P."/>
            <person name="Roesch P."/>
            <person name="Rasko D."/>
            <person name="Buckles E.L."/>
            <person name="Liou S.-R."/>
            <person name="Boutin A."/>
            <person name="Hackett J."/>
            <person name="Stroud D."/>
            <person name="Mayhew G.F."/>
            <person name="Rose D.J."/>
            <person name="Zhou S."/>
            <person name="Schwartz D.C."/>
            <person name="Perna N.T."/>
            <person name="Mobley H.L.T."/>
            <person name="Donnenberg M.S."/>
            <person name="Blattner F.R."/>
        </authorList>
    </citation>
    <scope>NUCLEOTIDE SEQUENCE [LARGE SCALE GENOMIC DNA]</scope>
    <source>
        <strain>CFT073 / ATCC 700928 / UPEC</strain>
    </source>
</reference>
<reference key="2">
    <citation type="journal article" date="2012" name="PLoS Pathog.">
        <title>Toxin-antitoxin systems are important for niche-specific colonization and stress resistance of uropathogenic Escherichia coli.</title>
        <authorList>
            <person name="Norton J.P."/>
            <person name="Mulvey M.A."/>
        </authorList>
    </citation>
    <scope>DISRUPTION PHENOTYPE</scope>
    <source>
        <strain>CFT073 / ATCC 700928 / UPEC</strain>
    </source>
</reference>
<accession>Q8FHF3</accession>